<geneLocation type="chloroplast"/>
<reference key="1">
    <citation type="submission" date="1989-05" db="EMBL/GenBank/DDBJ databases">
        <authorList>
            <person name="Haley J."/>
            <person name="Bogorad L."/>
        </authorList>
    </citation>
    <scope>NUCLEOTIDE SEQUENCE [GENOMIC DNA]</scope>
    <source>
        <strain>cv. FR9cms X FR37</strain>
    </source>
</reference>
<reference key="2">
    <citation type="journal article" date="1995" name="J. Mol. Biol.">
        <title>Complete sequence of the maize chloroplast genome: gene content, hotspots of divergence and fine tuning of genetic information by transcript editing.</title>
        <authorList>
            <person name="Maier R.M."/>
            <person name="Neckermann K."/>
            <person name="Igloi G.L."/>
            <person name="Koessel H."/>
        </authorList>
    </citation>
    <scope>NUCLEOTIDE SEQUENCE [LARGE SCALE GENOMIC DNA]</scope>
    <source>
        <strain>cv. B73</strain>
    </source>
</reference>
<protein>
    <recommendedName>
        <fullName evidence="1">Cytochrome b559 subunit beta</fullName>
    </recommendedName>
    <alternativeName>
        <fullName evidence="1">PSII reaction center subunit VI</fullName>
    </alternativeName>
</protein>
<feature type="chain" id="PRO_0000200417" description="Cytochrome b559 subunit beta">
    <location>
        <begin position="1"/>
        <end position="39"/>
    </location>
</feature>
<feature type="transmembrane region" description="Helical" evidence="1">
    <location>
        <begin position="14"/>
        <end position="30"/>
    </location>
</feature>
<feature type="binding site" description="axial binding residue" evidence="1">
    <location>
        <position position="18"/>
    </location>
    <ligand>
        <name>heme</name>
        <dbReference type="ChEBI" id="CHEBI:30413"/>
        <note>ligand shared with alpha subunit</note>
    </ligand>
    <ligandPart>
        <name>Fe</name>
        <dbReference type="ChEBI" id="CHEBI:18248"/>
    </ligandPart>
</feature>
<proteinExistence type="inferred from homology"/>
<sequence length="39" mass="4484">MTIDRTYPIFTVRWLAVHGLAVPTVFFLGSISAMQFIQR</sequence>
<name>PSBF_MAIZE</name>
<evidence type="ECO:0000255" key="1">
    <source>
        <dbReference type="HAMAP-Rule" id="MF_00643"/>
    </source>
</evidence>
<gene>
    <name evidence="1" type="primary">psbF</name>
</gene>
<accession>P69523</accession>
<accession>P12088</accession>
<keyword id="KW-0150">Chloroplast</keyword>
<keyword id="KW-0249">Electron transport</keyword>
<keyword id="KW-0349">Heme</keyword>
<keyword id="KW-0408">Iron</keyword>
<keyword id="KW-0472">Membrane</keyword>
<keyword id="KW-0479">Metal-binding</keyword>
<keyword id="KW-0602">Photosynthesis</keyword>
<keyword id="KW-0604">Photosystem II</keyword>
<keyword id="KW-0934">Plastid</keyword>
<keyword id="KW-1185">Reference proteome</keyword>
<keyword id="KW-0793">Thylakoid</keyword>
<keyword id="KW-0812">Transmembrane</keyword>
<keyword id="KW-1133">Transmembrane helix</keyword>
<keyword id="KW-0813">Transport</keyword>
<dbReference type="EMBL" id="J04502">
    <property type="protein sequence ID" value="AAA84477.1"/>
    <property type="molecule type" value="Genomic_DNA"/>
</dbReference>
<dbReference type="EMBL" id="X86563">
    <property type="protein sequence ID" value="CAA60301.1"/>
    <property type="molecule type" value="Genomic_DNA"/>
</dbReference>
<dbReference type="PIR" id="S58567">
    <property type="entry name" value="S58567"/>
</dbReference>
<dbReference type="RefSeq" id="NP_043040.1">
    <property type="nucleotide sequence ID" value="NC_001666.2"/>
</dbReference>
<dbReference type="SMR" id="P69523"/>
<dbReference type="FunCoup" id="P69523">
    <property type="interactions" value="134"/>
</dbReference>
<dbReference type="STRING" id="4577.P69523"/>
<dbReference type="PaxDb" id="4577-GRMZM5G877110_P01"/>
<dbReference type="GeneID" id="845204"/>
<dbReference type="KEGG" id="zma:845204"/>
<dbReference type="MaizeGDB" id="69554"/>
<dbReference type="eggNOG" id="ENOG502SEUE">
    <property type="taxonomic scope" value="Eukaryota"/>
</dbReference>
<dbReference type="InParanoid" id="P69523"/>
<dbReference type="OrthoDB" id="77at2759"/>
<dbReference type="Proteomes" id="UP000007305">
    <property type="component" value="Chloroplast"/>
</dbReference>
<dbReference type="GO" id="GO:0009535">
    <property type="term" value="C:chloroplast thylakoid membrane"/>
    <property type="evidence" value="ECO:0007669"/>
    <property type="project" value="UniProtKB-SubCell"/>
</dbReference>
<dbReference type="GO" id="GO:0009539">
    <property type="term" value="C:photosystem II reaction center"/>
    <property type="evidence" value="ECO:0007669"/>
    <property type="project" value="InterPro"/>
</dbReference>
<dbReference type="GO" id="GO:0009055">
    <property type="term" value="F:electron transfer activity"/>
    <property type="evidence" value="ECO:0007669"/>
    <property type="project" value="UniProtKB-UniRule"/>
</dbReference>
<dbReference type="GO" id="GO:0020037">
    <property type="term" value="F:heme binding"/>
    <property type="evidence" value="ECO:0007669"/>
    <property type="project" value="InterPro"/>
</dbReference>
<dbReference type="GO" id="GO:0005506">
    <property type="term" value="F:iron ion binding"/>
    <property type="evidence" value="ECO:0007669"/>
    <property type="project" value="UniProtKB-UniRule"/>
</dbReference>
<dbReference type="GO" id="GO:0009767">
    <property type="term" value="P:photosynthetic electron transport chain"/>
    <property type="evidence" value="ECO:0007669"/>
    <property type="project" value="InterPro"/>
</dbReference>
<dbReference type="HAMAP" id="MF_00643">
    <property type="entry name" value="PSII_PsbF"/>
    <property type="match status" value="1"/>
</dbReference>
<dbReference type="InterPro" id="IPR006241">
    <property type="entry name" value="PSII_cyt_b559_bsu"/>
</dbReference>
<dbReference type="InterPro" id="IPR006216">
    <property type="entry name" value="PSII_cyt_b559_CS"/>
</dbReference>
<dbReference type="InterPro" id="IPR013081">
    <property type="entry name" value="PSII_cyt_b559_N"/>
</dbReference>
<dbReference type="NCBIfam" id="TIGR01333">
    <property type="entry name" value="cyt_b559_beta"/>
    <property type="match status" value="1"/>
</dbReference>
<dbReference type="Pfam" id="PF00283">
    <property type="entry name" value="Cytochrom_B559"/>
    <property type="match status" value="1"/>
</dbReference>
<dbReference type="PIRSF" id="PIRSF000037">
    <property type="entry name" value="PsbF"/>
    <property type="match status" value="1"/>
</dbReference>
<dbReference type="SUPFAM" id="SSF161045">
    <property type="entry name" value="Cytochrome b559 subunits"/>
    <property type="match status" value="1"/>
</dbReference>
<dbReference type="PROSITE" id="PS00537">
    <property type="entry name" value="CYTOCHROME_B559"/>
    <property type="match status" value="1"/>
</dbReference>
<organism>
    <name type="scientific">Zea mays</name>
    <name type="common">Maize</name>
    <dbReference type="NCBI Taxonomy" id="4577"/>
    <lineage>
        <taxon>Eukaryota</taxon>
        <taxon>Viridiplantae</taxon>
        <taxon>Streptophyta</taxon>
        <taxon>Embryophyta</taxon>
        <taxon>Tracheophyta</taxon>
        <taxon>Spermatophyta</taxon>
        <taxon>Magnoliopsida</taxon>
        <taxon>Liliopsida</taxon>
        <taxon>Poales</taxon>
        <taxon>Poaceae</taxon>
        <taxon>PACMAD clade</taxon>
        <taxon>Panicoideae</taxon>
        <taxon>Andropogonodae</taxon>
        <taxon>Andropogoneae</taxon>
        <taxon>Tripsacinae</taxon>
        <taxon>Zea</taxon>
    </lineage>
</organism>
<comment type="function">
    <text evidence="1">This b-type cytochrome is tightly associated with the reaction center of photosystem II (PSII). PSII is a light-driven water:plastoquinone oxidoreductase that uses light energy to abstract electrons from H(2)O, generating O(2) and a proton gradient subsequently used for ATP formation. It consists of a core antenna complex that captures photons, and an electron transfer chain that converts photonic excitation into a charge separation.</text>
</comment>
<comment type="cofactor">
    <cofactor evidence="1">
        <name>heme b</name>
        <dbReference type="ChEBI" id="CHEBI:60344"/>
    </cofactor>
    <text evidence="1">With its partner (PsbE) binds heme. PSII binds additional chlorophylls, carotenoids and specific lipids.</text>
</comment>
<comment type="subunit">
    <text evidence="1">Heterodimer of an alpha subunit and a beta subunit. PSII is composed of 1 copy each of membrane proteins PsbA, PsbB, PsbC, PsbD, PsbE, PsbF, PsbH, PsbI, PsbJ, PsbK, PsbL, PsbM, PsbT, PsbX, PsbY, PsbZ, Psb30/Ycf12, at least 3 peripheral proteins of the oxygen-evolving complex and a large number of cofactors. It forms dimeric complexes.</text>
</comment>
<comment type="subcellular location">
    <subcellularLocation>
        <location evidence="1">Plastid</location>
        <location evidence="1">Chloroplast thylakoid membrane</location>
        <topology evidence="1">Single-pass membrane protein</topology>
    </subcellularLocation>
</comment>
<comment type="similarity">
    <text evidence="1">Belongs to the PsbE/PsbF family.</text>
</comment>